<keyword id="KW-0687">Ribonucleoprotein</keyword>
<keyword id="KW-0689">Ribosomal protein</keyword>
<keyword id="KW-0694">RNA-binding</keyword>
<keyword id="KW-0699">rRNA-binding</keyword>
<proteinExistence type="inferred from homology"/>
<name>RS3_GEOSW</name>
<feature type="chain" id="PRO_1000214342" description="Small ribosomal subunit protein uS3">
    <location>
        <begin position="1"/>
        <end position="218"/>
    </location>
</feature>
<feature type="domain" description="KH type-2" evidence="1">
    <location>
        <begin position="38"/>
        <end position="106"/>
    </location>
</feature>
<evidence type="ECO:0000255" key="1">
    <source>
        <dbReference type="HAMAP-Rule" id="MF_01309"/>
    </source>
</evidence>
<evidence type="ECO:0000305" key="2"/>
<organism>
    <name type="scientific">Geobacillus sp. (strain WCH70)</name>
    <dbReference type="NCBI Taxonomy" id="471223"/>
    <lineage>
        <taxon>Bacteria</taxon>
        <taxon>Bacillati</taxon>
        <taxon>Bacillota</taxon>
        <taxon>Bacilli</taxon>
        <taxon>Bacillales</taxon>
        <taxon>Anoxybacillaceae</taxon>
        <taxon>Geobacillus</taxon>
    </lineage>
</organism>
<dbReference type="EMBL" id="CP001638">
    <property type="protein sequence ID" value="ACS23057.1"/>
    <property type="molecule type" value="Genomic_DNA"/>
</dbReference>
<dbReference type="SMR" id="C5D3S3"/>
<dbReference type="STRING" id="471223.GWCH70_0117"/>
<dbReference type="KEGG" id="gwc:GWCH70_0117"/>
<dbReference type="eggNOG" id="COG0092">
    <property type="taxonomic scope" value="Bacteria"/>
</dbReference>
<dbReference type="HOGENOM" id="CLU_058591_0_2_9"/>
<dbReference type="OrthoDB" id="9806396at2"/>
<dbReference type="GO" id="GO:0022627">
    <property type="term" value="C:cytosolic small ribosomal subunit"/>
    <property type="evidence" value="ECO:0007669"/>
    <property type="project" value="TreeGrafter"/>
</dbReference>
<dbReference type="GO" id="GO:0003729">
    <property type="term" value="F:mRNA binding"/>
    <property type="evidence" value="ECO:0007669"/>
    <property type="project" value="UniProtKB-UniRule"/>
</dbReference>
<dbReference type="GO" id="GO:0019843">
    <property type="term" value="F:rRNA binding"/>
    <property type="evidence" value="ECO:0007669"/>
    <property type="project" value="UniProtKB-UniRule"/>
</dbReference>
<dbReference type="GO" id="GO:0003735">
    <property type="term" value="F:structural constituent of ribosome"/>
    <property type="evidence" value="ECO:0007669"/>
    <property type="project" value="InterPro"/>
</dbReference>
<dbReference type="GO" id="GO:0006412">
    <property type="term" value="P:translation"/>
    <property type="evidence" value="ECO:0007669"/>
    <property type="project" value="UniProtKB-UniRule"/>
</dbReference>
<dbReference type="CDD" id="cd02412">
    <property type="entry name" value="KH-II_30S_S3"/>
    <property type="match status" value="1"/>
</dbReference>
<dbReference type="FunFam" id="3.30.1140.32:FF:000001">
    <property type="entry name" value="30S ribosomal protein S3"/>
    <property type="match status" value="1"/>
</dbReference>
<dbReference type="FunFam" id="3.30.300.20:FF:000001">
    <property type="entry name" value="30S ribosomal protein S3"/>
    <property type="match status" value="1"/>
</dbReference>
<dbReference type="Gene3D" id="3.30.300.20">
    <property type="match status" value="1"/>
</dbReference>
<dbReference type="Gene3D" id="3.30.1140.32">
    <property type="entry name" value="Ribosomal protein S3, C-terminal domain"/>
    <property type="match status" value="1"/>
</dbReference>
<dbReference type="HAMAP" id="MF_01309_B">
    <property type="entry name" value="Ribosomal_uS3_B"/>
    <property type="match status" value="1"/>
</dbReference>
<dbReference type="InterPro" id="IPR004087">
    <property type="entry name" value="KH_dom"/>
</dbReference>
<dbReference type="InterPro" id="IPR015946">
    <property type="entry name" value="KH_dom-like_a/b"/>
</dbReference>
<dbReference type="InterPro" id="IPR004044">
    <property type="entry name" value="KH_dom_type_2"/>
</dbReference>
<dbReference type="InterPro" id="IPR009019">
    <property type="entry name" value="KH_sf_prok-type"/>
</dbReference>
<dbReference type="InterPro" id="IPR036419">
    <property type="entry name" value="Ribosomal_S3_C_sf"/>
</dbReference>
<dbReference type="InterPro" id="IPR005704">
    <property type="entry name" value="Ribosomal_uS3_bac-typ"/>
</dbReference>
<dbReference type="InterPro" id="IPR001351">
    <property type="entry name" value="Ribosomal_uS3_C"/>
</dbReference>
<dbReference type="InterPro" id="IPR018280">
    <property type="entry name" value="Ribosomal_uS3_CS"/>
</dbReference>
<dbReference type="NCBIfam" id="TIGR01009">
    <property type="entry name" value="rpsC_bact"/>
    <property type="match status" value="1"/>
</dbReference>
<dbReference type="PANTHER" id="PTHR11760">
    <property type="entry name" value="30S/40S RIBOSOMAL PROTEIN S3"/>
    <property type="match status" value="1"/>
</dbReference>
<dbReference type="PANTHER" id="PTHR11760:SF19">
    <property type="entry name" value="SMALL RIBOSOMAL SUBUNIT PROTEIN US3C"/>
    <property type="match status" value="1"/>
</dbReference>
<dbReference type="Pfam" id="PF07650">
    <property type="entry name" value="KH_2"/>
    <property type="match status" value="1"/>
</dbReference>
<dbReference type="Pfam" id="PF00189">
    <property type="entry name" value="Ribosomal_S3_C"/>
    <property type="match status" value="1"/>
</dbReference>
<dbReference type="SMART" id="SM00322">
    <property type="entry name" value="KH"/>
    <property type="match status" value="1"/>
</dbReference>
<dbReference type="SUPFAM" id="SSF54814">
    <property type="entry name" value="Prokaryotic type KH domain (KH-domain type II)"/>
    <property type="match status" value="1"/>
</dbReference>
<dbReference type="SUPFAM" id="SSF54821">
    <property type="entry name" value="Ribosomal protein S3 C-terminal domain"/>
    <property type="match status" value="1"/>
</dbReference>
<dbReference type="PROSITE" id="PS50823">
    <property type="entry name" value="KH_TYPE_2"/>
    <property type="match status" value="1"/>
</dbReference>
<dbReference type="PROSITE" id="PS00548">
    <property type="entry name" value="RIBOSOMAL_S3"/>
    <property type="match status" value="1"/>
</dbReference>
<comment type="function">
    <text evidence="1">Binds the lower part of the 30S subunit head. Binds mRNA in the 70S ribosome, positioning it for translation.</text>
</comment>
<comment type="subunit">
    <text evidence="1">Part of the 30S ribosomal subunit. Forms a tight complex with proteins S10 and S14.</text>
</comment>
<comment type="similarity">
    <text evidence="1">Belongs to the universal ribosomal protein uS3 family.</text>
</comment>
<reference key="1">
    <citation type="submission" date="2009-06" db="EMBL/GenBank/DDBJ databases">
        <title>Complete sequence of chromosome of Geopacillus sp. WCH70.</title>
        <authorList>
            <consortium name="US DOE Joint Genome Institute"/>
            <person name="Lucas S."/>
            <person name="Copeland A."/>
            <person name="Lapidus A."/>
            <person name="Glavina del Rio T."/>
            <person name="Dalin E."/>
            <person name="Tice H."/>
            <person name="Bruce D."/>
            <person name="Goodwin L."/>
            <person name="Pitluck S."/>
            <person name="Chertkov O."/>
            <person name="Brettin T."/>
            <person name="Detter J.C."/>
            <person name="Han C."/>
            <person name="Larimer F."/>
            <person name="Land M."/>
            <person name="Hauser L."/>
            <person name="Kyrpides N."/>
            <person name="Mikhailova N."/>
            <person name="Brumm P."/>
            <person name="Mead D.A."/>
            <person name="Richardson P."/>
        </authorList>
    </citation>
    <scope>NUCLEOTIDE SEQUENCE [LARGE SCALE GENOMIC DNA]</scope>
    <source>
        <strain>WCH70</strain>
    </source>
</reference>
<accession>C5D3S3</accession>
<protein>
    <recommendedName>
        <fullName evidence="1">Small ribosomal subunit protein uS3</fullName>
    </recommendedName>
    <alternativeName>
        <fullName evidence="2">30S ribosomal protein S3</fullName>
    </alternativeName>
</protein>
<sequence length="218" mass="24381">MGQKVNPVGLRIGIIRDWDSRWYAEKDYADLLHEDLKIREYINKRLQDAAVSRIEIERAANRVNITIHTAKPGMVIGKGGSEVEALRKALTQLTGKRVHINIVEIKKPDLDAKLVAENIARQLENRVSFRRAQKQAIQRAMRAGAKGIKTMVSGRLGGADIARSEHYSEGTVPLHTLRADIDYATAEADTTYGKLGVKVWIYRGEVLPTKKKTEEGGK</sequence>
<gene>
    <name evidence="1" type="primary">rpsC</name>
    <name type="ordered locus">GWCH70_0117</name>
</gene>